<keyword id="KW-0010">Activator</keyword>
<keyword id="KW-0963">Cytoplasm</keyword>
<keyword id="KW-0238">DNA-binding</keyword>
<keyword id="KW-0597">Phosphoprotein</keyword>
<keyword id="KW-0804">Transcription</keyword>
<keyword id="KW-0805">Transcription regulation</keyword>
<keyword id="KW-0902">Two-component regulatory system</keyword>
<keyword id="KW-0843">Virulence</keyword>
<protein>
    <recommendedName>
        <fullName>Heme response regulator HssR</fullName>
    </recommendedName>
</protein>
<comment type="function">
    <text evidence="1">Member of the two-component regulatory system HssS/HssR involved in intracellular heme homeostasis and tempering of staphylococcal virulence. Phosphorylated HssR binds to a direct repeat sequence within hrtAB promoter and activates the expression of hrtAB, an efflux pump, in response to extracellular heme, hemin, hemoglobin or blood (By similarity).</text>
</comment>
<comment type="subcellular location">
    <subcellularLocation>
        <location evidence="4">Cytoplasm</location>
    </subcellularLocation>
</comment>
<comment type="PTM">
    <text evidence="1">Phosphorylated by HssS.</text>
</comment>
<organism>
    <name type="scientific">Staphylococcus aureus (strain Mu50 / ATCC 700699)</name>
    <dbReference type="NCBI Taxonomy" id="158878"/>
    <lineage>
        <taxon>Bacteria</taxon>
        <taxon>Bacillati</taxon>
        <taxon>Bacillota</taxon>
        <taxon>Bacilli</taxon>
        <taxon>Bacillales</taxon>
        <taxon>Staphylococcaceae</taxon>
        <taxon>Staphylococcus</taxon>
    </lineage>
</organism>
<sequence>MVQCLVVDDDPRILNYIASHLQTEHIDAYTQPSGEAALKLLEKQRVDIAVVDIMMDGMDGFQLCNTLKNDYDIPVIMLTARDALSDKERAFISGTDDYVTKPFEVKELIFRIRAVLRRYNINSNSEMTIGNLTLNQSYLELQVSNKTMTLPNKEFQLLFMLAARPKQIFTREQIIEKIWGYDYEGDERTVDVHIKRLRQRLKKLNATLTIETVRGQGYKVENHV</sequence>
<accession>Q99RR6</accession>
<reference key="1">
    <citation type="journal article" date="2001" name="Lancet">
        <title>Whole genome sequencing of meticillin-resistant Staphylococcus aureus.</title>
        <authorList>
            <person name="Kuroda M."/>
            <person name="Ohta T."/>
            <person name="Uchiyama I."/>
            <person name="Baba T."/>
            <person name="Yuzawa H."/>
            <person name="Kobayashi I."/>
            <person name="Cui L."/>
            <person name="Oguchi A."/>
            <person name="Aoki K."/>
            <person name="Nagai Y."/>
            <person name="Lian J.-Q."/>
            <person name="Ito T."/>
            <person name="Kanamori M."/>
            <person name="Matsumaru H."/>
            <person name="Maruyama A."/>
            <person name="Murakami H."/>
            <person name="Hosoyama A."/>
            <person name="Mizutani-Ui Y."/>
            <person name="Takahashi N.K."/>
            <person name="Sawano T."/>
            <person name="Inoue R."/>
            <person name="Kaito C."/>
            <person name="Sekimizu K."/>
            <person name="Hirakawa H."/>
            <person name="Kuhara S."/>
            <person name="Goto S."/>
            <person name="Yabuzaki J."/>
            <person name="Kanehisa M."/>
            <person name="Yamashita A."/>
            <person name="Oshima K."/>
            <person name="Furuya K."/>
            <person name="Yoshino C."/>
            <person name="Shiba T."/>
            <person name="Hattori M."/>
            <person name="Ogasawara N."/>
            <person name="Hayashi H."/>
            <person name="Hiramatsu K."/>
        </authorList>
    </citation>
    <scope>NUCLEOTIDE SEQUENCE [LARGE SCALE GENOMIC DNA]</scope>
    <source>
        <strain>Mu50 / ATCC 700699</strain>
    </source>
</reference>
<dbReference type="EMBL" id="BA000017">
    <property type="protein sequence ID" value="BAB58523.1"/>
    <property type="molecule type" value="Genomic_DNA"/>
</dbReference>
<dbReference type="RefSeq" id="WP_000249497.1">
    <property type="nucleotide sequence ID" value="NC_002758.2"/>
</dbReference>
<dbReference type="SMR" id="Q99RR6"/>
<dbReference type="KEGG" id="sav:SAV2361"/>
<dbReference type="HOGENOM" id="CLU_000445_30_3_9"/>
<dbReference type="PhylomeDB" id="Q99RR6"/>
<dbReference type="Proteomes" id="UP000002481">
    <property type="component" value="Chromosome"/>
</dbReference>
<dbReference type="GO" id="GO:0005829">
    <property type="term" value="C:cytosol"/>
    <property type="evidence" value="ECO:0007669"/>
    <property type="project" value="TreeGrafter"/>
</dbReference>
<dbReference type="GO" id="GO:0032993">
    <property type="term" value="C:protein-DNA complex"/>
    <property type="evidence" value="ECO:0007669"/>
    <property type="project" value="TreeGrafter"/>
</dbReference>
<dbReference type="GO" id="GO:0000156">
    <property type="term" value="F:phosphorelay response regulator activity"/>
    <property type="evidence" value="ECO:0007669"/>
    <property type="project" value="TreeGrafter"/>
</dbReference>
<dbReference type="GO" id="GO:0000976">
    <property type="term" value="F:transcription cis-regulatory region binding"/>
    <property type="evidence" value="ECO:0007669"/>
    <property type="project" value="TreeGrafter"/>
</dbReference>
<dbReference type="GO" id="GO:0006355">
    <property type="term" value="P:regulation of DNA-templated transcription"/>
    <property type="evidence" value="ECO:0007669"/>
    <property type="project" value="InterPro"/>
</dbReference>
<dbReference type="CDD" id="cd17574">
    <property type="entry name" value="REC_OmpR"/>
    <property type="match status" value="1"/>
</dbReference>
<dbReference type="CDD" id="cd00383">
    <property type="entry name" value="trans_reg_C"/>
    <property type="match status" value="1"/>
</dbReference>
<dbReference type="FunFam" id="1.10.10.10:FF:000018">
    <property type="entry name" value="DNA-binding response regulator ResD"/>
    <property type="match status" value="1"/>
</dbReference>
<dbReference type="Gene3D" id="3.40.50.2300">
    <property type="match status" value="1"/>
</dbReference>
<dbReference type="Gene3D" id="6.10.250.690">
    <property type="match status" value="1"/>
</dbReference>
<dbReference type="Gene3D" id="1.10.10.10">
    <property type="entry name" value="Winged helix-like DNA-binding domain superfamily/Winged helix DNA-binding domain"/>
    <property type="match status" value="1"/>
</dbReference>
<dbReference type="InterPro" id="IPR011006">
    <property type="entry name" value="CheY-like_superfamily"/>
</dbReference>
<dbReference type="InterPro" id="IPR001867">
    <property type="entry name" value="OmpR/PhoB-type_DNA-bd"/>
</dbReference>
<dbReference type="InterPro" id="IPR001789">
    <property type="entry name" value="Sig_transdc_resp-reg_receiver"/>
</dbReference>
<dbReference type="InterPro" id="IPR039420">
    <property type="entry name" value="WalR-like"/>
</dbReference>
<dbReference type="InterPro" id="IPR036388">
    <property type="entry name" value="WH-like_DNA-bd_sf"/>
</dbReference>
<dbReference type="PANTHER" id="PTHR48111:SF49">
    <property type="entry name" value="HEME RESPONSE REGULATOR HSSR"/>
    <property type="match status" value="1"/>
</dbReference>
<dbReference type="PANTHER" id="PTHR48111">
    <property type="entry name" value="REGULATOR OF RPOS"/>
    <property type="match status" value="1"/>
</dbReference>
<dbReference type="Pfam" id="PF00072">
    <property type="entry name" value="Response_reg"/>
    <property type="match status" value="1"/>
</dbReference>
<dbReference type="Pfam" id="PF00486">
    <property type="entry name" value="Trans_reg_C"/>
    <property type="match status" value="1"/>
</dbReference>
<dbReference type="SMART" id="SM00448">
    <property type="entry name" value="REC"/>
    <property type="match status" value="1"/>
</dbReference>
<dbReference type="SMART" id="SM00862">
    <property type="entry name" value="Trans_reg_C"/>
    <property type="match status" value="1"/>
</dbReference>
<dbReference type="SUPFAM" id="SSF52172">
    <property type="entry name" value="CheY-like"/>
    <property type="match status" value="1"/>
</dbReference>
<dbReference type="PROSITE" id="PS51755">
    <property type="entry name" value="OMPR_PHOB"/>
    <property type="match status" value="1"/>
</dbReference>
<dbReference type="PROSITE" id="PS50110">
    <property type="entry name" value="RESPONSE_REGULATORY"/>
    <property type="match status" value="1"/>
</dbReference>
<feature type="chain" id="PRO_0000331326" description="Heme response regulator HssR">
    <location>
        <begin position="1"/>
        <end position="224"/>
    </location>
</feature>
<feature type="domain" description="Response regulatory" evidence="2">
    <location>
        <begin position="3"/>
        <end position="116"/>
    </location>
</feature>
<feature type="DNA-binding region" description="OmpR/PhoB-type" evidence="3">
    <location>
        <begin position="124"/>
        <end position="222"/>
    </location>
</feature>
<feature type="modified residue" description="4-aspartylphosphate" evidence="2">
    <location>
        <position position="52"/>
    </location>
</feature>
<evidence type="ECO:0000250" key="1"/>
<evidence type="ECO:0000255" key="2">
    <source>
        <dbReference type="PROSITE-ProRule" id="PRU00169"/>
    </source>
</evidence>
<evidence type="ECO:0000255" key="3">
    <source>
        <dbReference type="PROSITE-ProRule" id="PRU01091"/>
    </source>
</evidence>
<evidence type="ECO:0000305" key="4"/>
<proteinExistence type="inferred from homology"/>
<name>HSSR_STAAM</name>
<gene>
    <name type="primary">hssR</name>
    <name type="ordered locus">SAV2361</name>
</gene>